<dbReference type="EC" id="3.1.3.25" evidence="3"/>
<dbReference type="EMBL" id="AL157959">
    <property type="protein sequence ID" value="CAM08704.1"/>
    <property type="molecule type" value="Genomic_DNA"/>
</dbReference>
<dbReference type="PIR" id="B81848">
    <property type="entry name" value="B81848"/>
</dbReference>
<dbReference type="RefSeq" id="WP_002237077.1">
    <property type="nucleotide sequence ID" value="NC_003116.1"/>
</dbReference>
<dbReference type="SMR" id="Q9JU03"/>
<dbReference type="EnsemblBacteria" id="CAM08704">
    <property type="protein sequence ID" value="CAM08704"/>
    <property type="gene ID" value="NMA1559"/>
</dbReference>
<dbReference type="KEGG" id="nma:NMA1559"/>
<dbReference type="HOGENOM" id="CLU_044118_0_4_4"/>
<dbReference type="Proteomes" id="UP000000626">
    <property type="component" value="Chromosome"/>
</dbReference>
<dbReference type="GO" id="GO:0005737">
    <property type="term" value="C:cytoplasm"/>
    <property type="evidence" value="ECO:0007669"/>
    <property type="project" value="UniProtKB-SubCell"/>
</dbReference>
<dbReference type="GO" id="GO:0008934">
    <property type="term" value="F:inositol monophosphate 1-phosphatase activity"/>
    <property type="evidence" value="ECO:0007669"/>
    <property type="project" value="InterPro"/>
</dbReference>
<dbReference type="GO" id="GO:0046872">
    <property type="term" value="F:metal ion binding"/>
    <property type="evidence" value="ECO:0007669"/>
    <property type="project" value="UniProtKB-KW"/>
</dbReference>
<dbReference type="GO" id="GO:0003723">
    <property type="term" value="F:RNA binding"/>
    <property type="evidence" value="ECO:0007669"/>
    <property type="project" value="UniProtKB-KW"/>
</dbReference>
<dbReference type="GO" id="GO:0006020">
    <property type="term" value="P:inositol metabolic process"/>
    <property type="evidence" value="ECO:0007669"/>
    <property type="project" value="TreeGrafter"/>
</dbReference>
<dbReference type="GO" id="GO:0046854">
    <property type="term" value="P:phosphatidylinositol phosphate biosynthetic process"/>
    <property type="evidence" value="ECO:0007669"/>
    <property type="project" value="InterPro"/>
</dbReference>
<dbReference type="GO" id="GO:0042254">
    <property type="term" value="P:ribosome biogenesis"/>
    <property type="evidence" value="ECO:0007669"/>
    <property type="project" value="UniProtKB-KW"/>
</dbReference>
<dbReference type="GO" id="GO:0007165">
    <property type="term" value="P:signal transduction"/>
    <property type="evidence" value="ECO:0007669"/>
    <property type="project" value="TreeGrafter"/>
</dbReference>
<dbReference type="GO" id="GO:0031564">
    <property type="term" value="P:transcription antitermination"/>
    <property type="evidence" value="ECO:0007669"/>
    <property type="project" value="UniProtKB-KW"/>
</dbReference>
<dbReference type="CDD" id="cd01639">
    <property type="entry name" value="IMPase"/>
    <property type="match status" value="1"/>
</dbReference>
<dbReference type="FunFam" id="3.30.540.10:FF:000013">
    <property type="entry name" value="Inositol-1-monophosphatase"/>
    <property type="match status" value="1"/>
</dbReference>
<dbReference type="FunFam" id="3.40.190.80:FF:000002">
    <property type="entry name" value="Inositol-1-monophosphatase"/>
    <property type="match status" value="1"/>
</dbReference>
<dbReference type="Gene3D" id="3.40.190.80">
    <property type="match status" value="1"/>
</dbReference>
<dbReference type="Gene3D" id="3.30.540.10">
    <property type="entry name" value="Fructose-1,6-Bisphosphatase, subunit A, domain 1"/>
    <property type="match status" value="1"/>
</dbReference>
<dbReference type="InterPro" id="IPR033942">
    <property type="entry name" value="IMPase"/>
</dbReference>
<dbReference type="InterPro" id="IPR020583">
    <property type="entry name" value="Inositol_monoP_metal-BS"/>
</dbReference>
<dbReference type="InterPro" id="IPR000760">
    <property type="entry name" value="Inositol_monophosphatase-like"/>
</dbReference>
<dbReference type="InterPro" id="IPR020550">
    <property type="entry name" value="Inositol_monophosphatase_CS"/>
</dbReference>
<dbReference type="InterPro" id="IPR022337">
    <property type="entry name" value="Inositol_monophosphatase_SuhB"/>
</dbReference>
<dbReference type="PANTHER" id="PTHR20854">
    <property type="entry name" value="INOSITOL MONOPHOSPHATASE"/>
    <property type="match status" value="1"/>
</dbReference>
<dbReference type="PANTHER" id="PTHR20854:SF4">
    <property type="entry name" value="INOSITOL-1-MONOPHOSPHATASE-RELATED"/>
    <property type="match status" value="1"/>
</dbReference>
<dbReference type="Pfam" id="PF00459">
    <property type="entry name" value="Inositol_P"/>
    <property type="match status" value="1"/>
</dbReference>
<dbReference type="PRINTS" id="PR00377">
    <property type="entry name" value="IMPHPHTASES"/>
</dbReference>
<dbReference type="PRINTS" id="PR01959">
    <property type="entry name" value="SBIMPHPHTASE"/>
</dbReference>
<dbReference type="SUPFAM" id="SSF56655">
    <property type="entry name" value="Carbohydrate phosphatase"/>
    <property type="match status" value="1"/>
</dbReference>
<dbReference type="PROSITE" id="PS00629">
    <property type="entry name" value="IMP_1"/>
    <property type="match status" value="1"/>
</dbReference>
<dbReference type="PROSITE" id="PS00630">
    <property type="entry name" value="IMP_2"/>
    <property type="match status" value="1"/>
</dbReference>
<reference key="1">
    <citation type="journal article" date="2000" name="Nature">
        <title>Complete DNA sequence of a serogroup A strain of Neisseria meningitidis Z2491.</title>
        <authorList>
            <person name="Parkhill J."/>
            <person name="Achtman M."/>
            <person name="James K.D."/>
            <person name="Bentley S.D."/>
            <person name="Churcher C.M."/>
            <person name="Klee S.R."/>
            <person name="Morelli G."/>
            <person name="Basham D."/>
            <person name="Brown D."/>
            <person name="Chillingworth T."/>
            <person name="Davies R.M."/>
            <person name="Davis P."/>
            <person name="Devlin K."/>
            <person name="Feltwell T."/>
            <person name="Hamlin N."/>
            <person name="Holroyd S."/>
            <person name="Jagels K."/>
            <person name="Leather S."/>
            <person name="Moule S."/>
            <person name="Mungall K.L."/>
            <person name="Quail M.A."/>
            <person name="Rajandream M.A."/>
            <person name="Rutherford K.M."/>
            <person name="Simmonds M."/>
            <person name="Skelton J."/>
            <person name="Whitehead S."/>
            <person name="Spratt B.G."/>
            <person name="Barrell B.G."/>
        </authorList>
    </citation>
    <scope>NUCLEOTIDE SEQUENCE [LARGE SCALE GENOMIC DNA]</scope>
    <source>
        <strain>DSM 15465 / Z2491</strain>
    </source>
</reference>
<proteinExistence type="inferred from homology"/>
<keyword id="KW-0143">Chaperone</keyword>
<keyword id="KW-0963">Cytoplasm</keyword>
<keyword id="KW-0378">Hydrolase</keyword>
<keyword id="KW-0460">Magnesium</keyword>
<keyword id="KW-0479">Metal-binding</keyword>
<keyword id="KW-0690">Ribosome biogenesis</keyword>
<keyword id="KW-0694">RNA-binding</keyword>
<keyword id="KW-0804">Transcription</keyword>
<keyword id="KW-0889">Transcription antitermination</keyword>
<keyword id="KW-0805">Transcription regulation</keyword>
<comment type="function">
    <text evidence="2 3">Might be part of the processive rRNA transcription and antitermination complex (rrnTAC). The complex forms an RNA-chaperone ring around the RNA exit tunnel of RNA polymerase (RNAP). It supports rapid transcription and antitermination of rRNA operons, cotranscriptional rRNA folding, and annealing of distal rRNA regions to allow correct ribosome biogenesis. This subunit may play a central role in organizing the structure.</text>
</comment>
<comment type="catalytic activity">
    <reaction evidence="3">
        <text>a myo-inositol phosphate + H2O = myo-inositol + phosphate</text>
        <dbReference type="Rhea" id="RHEA:24056"/>
        <dbReference type="ChEBI" id="CHEBI:15377"/>
        <dbReference type="ChEBI" id="CHEBI:17268"/>
        <dbReference type="ChEBI" id="CHEBI:43474"/>
        <dbReference type="ChEBI" id="CHEBI:84139"/>
        <dbReference type="EC" id="3.1.3.25"/>
    </reaction>
</comment>
<comment type="cofactor">
    <cofactor evidence="3">
        <name>Mg(2+)</name>
        <dbReference type="ChEBI" id="CHEBI:18420"/>
    </cofactor>
</comment>
<comment type="subunit">
    <text evidence="3">Homodimer. The rRNA transcription and antitermination complex (rrnTAC) consists of RNA polymerase (RNAP), NusA, NusB, NusE (rpsJ), NusG, SubB, ribosomal protein S4, DNA and precursor rRNA; S4 is more flexible than other subunits.</text>
</comment>
<comment type="subcellular location">
    <subcellularLocation>
        <location evidence="3">Cytoplasm</location>
    </subcellularLocation>
</comment>
<comment type="similarity">
    <text evidence="4">Belongs to the inositol monophosphatase superfamily.</text>
</comment>
<sequence length="261" mass="28497">MNPFLNTAFKAARRAGQMMIRAAGNLDAVKTDSKAFNDFVSDVDRNSEIILVEALKEAYPHHKITCEESGSHGKAAAEYEWIIDPLDGTTNFLHGHPQYAISMALLHKGVLQEALVYAPERNDVYMASRGKGALLNDRRIRVSNRIELNRCLIGTGFPVVDQSMMDKYLVILKDFLAKTAGGRREGAASLDLCAVATGRFDGFFEFNLKPWDIAAGALIVQEAGGIVTDMSGEDGWLESGDIVAANPKVLAQMLKIISAHV</sequence>
<gene>
    <name type="primary">suhB</name>
    <name type="ordered locus">NMA1559</name>
</gene>
<protein>
    <recommendedName>
        <fullName evidence="2">Putative Nus factor SuhB</fullName>
    </recommendedName>
    <alternativeName>
        <fullName>Inositol-1-monophosphatase</fullName>
        <shortName>I-1-Pase</shortName>
        <shortName>IMPase</shortName>
        <shortName>Inositol-1-phosphatase</shortName>
        <ecNumber evidence="3">3.1.3.25</ecNumber>
    </alternativeName>
</protein>
<name>SUHB_NEIMA</name>
<organism>
    <name type="scientific">Neisseria meningitidis serogroup A / serotype 4A (strain DSM 15465 / Z2491)</name>
    <dbReference type="NCBI Taxonomy" id="122587"/>
    <lineage>
        <taxon>Bacteria</taxon>
        <taxon>Pseudomonadati</taxon>
        <taxon>Pseudomonadota</taxon>
        <taxon>Betaproteobacteria</taxon>
        <taxon>Neisseriales</taxon>
        <taxon>Neisseriaceae</taxon>
        <taxon>Neisseria</taxon>
    </lineage>
</organism>
<accession>Q9JU03</accession>
<accession>A1ISE8</accession>
<evidence type="ECO:0000250" key="1"/>
<evidence type="ECO:0000250" key="2">
    <source>
        <dbReference type="UniProtKB" id="B4ED80"/>
    </source>
</evidence>
<evidence type="ECO:0000250" key="3">
    <source>
        <dbReference type="UniProtKB" id="P0ADG4"/>
    </source>
</evidence>
<evidence type="ECO:0000305" key="4"/>
<feature type="chain" id="PRO_0000142566" description="Putative Nus factor SuhB">
    <location>
        <begin position="1"/>
        <end position="261"/>
    </location>
</feature>
<feature type="binding site" evidence="3">
    <location>
        <position position="67"/>
    </location>
    <ligand>
        <name>Mg(2+)</name>
        <dbReference type="ChEBI" id="CHEBI:18420"/>
    </ligand>
</feature>
<feature type="binding site" evidence="1">
    <location>
        <position position="67"/>
    </location>
    <ligand>
        <name>substrate</name>
    </ligand>
</feature>
<feature type="binding site" evidence="3">
    <location>
        <position position="84"/>
    </location>
    <ligand>
        <name>Mg(2+)</name>
        <dbReference type="ChEBI" id="CHEBI:18420"/>
    </ligand>
</feature>
<feature type="binding site" evidence="1">
    <location>
        <begin position="86"/>
        <end position="89"/>
    </location>
    <ligand>
        <name>substrate</name>
    </ligand>
</feature>
<feature type="binding site" evidence="3">
    <location>
        <position position="86"/>
    </location>
    <ligand>
        <name>Mg(2+)</name>
        <dbReference type="ChEBI" id="CHEBI:18420"/>
    </ligand>
</feature>
<feature type="binding site" evidence="1">
    <location>
        <position position="183"/>
    </location>
    <ligand>
        <name>substrate</name>
    </ligand>
</feature>
<feature type="binding site" evidence="1">
    <location>
        <position position="212"/>
    </location>
    <ligand>
        <name>substrate</name>
    </ligand>
</feature>